<feature type="chain" id="PRO_0000336735" description="Probable nicotinate-nucleotide adenylyltransferase">
    <location>
        <begin position="1"/>
        <end position="213"/>
    </location>
</feature>
<accession>A9MKD1</accession>
<comment type="function">
    <text evidence="1">Catalyzes the reversible adenylation of nicotinate mononucleotide (NaMN) to nicotinic acid adenine dinucleotide (NaAD).</text>
</comment>
<comment type="catalytic activity">
    <reaction evidence="1">
        <text>nicotinate beta-D-ribonucleotide + ATP + H(+) = deamido-NAD(+) + diphosphate</text>
        <dbReference type="Rhea" id="RHEA:22860"/>
        <dbReference type="ChEBI" id="CHEBI:15378"/>
        <dbReference type="ChEBI" id="CHEBI:30616"/>
        <dbReference type="ChEBI" id="CHEBI:33019"/>
        <dbReference type="ChEBI" id="CHEBI:57502"/>
        <dbReference type="ChEBI" id="CHEBI:58437"/>
        <dbReference type="EC" id="2.7.7.18"/>
    </reaction>
</comment>
<comment type="pathway">
    <text evidence="1">Cofactor biosynthesis; NAD(+) biosynthesis; deamido-NAD(+) from nicotinate D-ribonucleotide: step 1/1.</text>
</comment>
<comment type="similarity">
    <text evidence="1">Belongs to the NadD family.</text>
</comment>
<comment type="sequence caution" evidence="2">
    <conflict type="erroneous initiation">
        <sequence resource="EMBL-CDS" id="ABX22150"/>
    </conflict>
</comment>
<sequence>MKSLQALFGGTFDPVHYGHLKPVETLANLIGLSRVIIMPNNVPPHRPQPEASSAQRKYMLELAIADKPLFTLDERELQRNAPSYTAQTLKAWREEQGPEAPLAFIIGQDSLLNFPTWHDYDTILDNTHLIVCRRPGYPLEMTQAQHQQWLEQHLTHTPDDLHQLPAGKIYLAETPWLNISATLIRERLEKGESCDDLLPENVLNYINQQGLYR</sequence>
<reference key="1">
    <citation type="submission" date="2007-11" db="EMBL/GenBank/DDBJ databases">
        <authorList>
            <consortium name="The Salmonella enterica serovar Arizonae Genome Sequencing Project"/>
            <person name="McClelland M."/>
            <person name="Sanderson E.K."/>
            <person name="Porwollik S."/>
            <person name="Spieth J."/>
            <person name="Clifton W.S."/>
            <person name="Fulton R."/>
            <person name="Chunyan W."/>
            <person name="Wollam A."/>
            <person name="Shah N."/>
            <person name="Pepin K."/>
            <person name="Bhonagiri V."/>
            <person name="Nash W."/>
            <person name="Johnson M."/>
            <person name="Thiruvilangam P."/>
            <person name="Wilson R."/>
        </authorList>
    </citation>
    <scope>NUCLEOTIDE SEQUENCE [LARGE SCALE GENOMIC DNA]</scope>
    <source>
        <strain>ATCC BAA-731 / CDC346-86 / RSK2980</strain>
    </source>
</reference>
<name>NADD_SALAR</name>
<keyword id="KW-0067">ATP-binding</keyword>
<keyword id="KW-0520">NAD</keyword>
<keyword id="KW-0547">Nucleotide-binding</keyword>
<keyword id="KW-0548">Nucleotidyltransferase</keyword>
<keyword id="KW-0662">Pyridine nucleotide biosynthesis</keyword>
<keyword id="KW-1185">Reference proteome</keyword>
<keyword id="KW-0808">Transferase</keyword>
<protein>
    <recommendedName>
        <fullName evidence="1">Probable nicotinate-nucleotide adenylyltransferase</fullName>
        <ecNumber evidence="1">2.7.7.18</ecNumber>
    </recommendedName>
    <alternativeName>
        <fullName evidence="1">Deamido-NAD(+) diphosphorylase</fullName>
    </alternativeName>
    <alternativeName>
        <fullName evidence="1">Deamido-NAD(+) pyrophosphorylase</fullName>
    </alternativeName>
    <alternativeName>
        <fullName evidence="1">Nicotinate mononucleotide adenylyltransferase</fullName>
        <shortName evidence="1">NaMN adenylyltransferase</shortName>
    </alternativeName>
</protein>
<proteinExistence type="inferred from homology"/>
<gene>
    <name evidence="1" type="primary">nadD</name>
    <name type="ordered locus">SARI_02287</name>
</gene>
<organism>
    <name type="scientific">Salmonella arizonae (strain ATCC BAA-731 / CDC346-86 / RSK2980)</name>
    <dbReference type="NCBI Taxonomy" id="41514"/>
    <lineage>
        <taxon>Bacteria</taxon>
        <taxon>Pseudomonadati</taxon>
        <taxon>Pseudomonadota</taxon>
        <taxon>Gammaproteobacteria</taxon>
        <taxon>Enterobacterales</taxon>
        <taxon>Enterobacteriaceae</taxon>
        <taxon>Salmonella</taxon>
    </lineage>
</organism>
<dbReference type="EC" id="2.7.7.18" evidence="1"/>
<dbReference type="EMBL" id="CP000880">
    <property type="protein sequence ID" value="ABX22150.1"/>
    <property type="status" value="ALT_INIT"/>
    <property type="molecule type" value="Genomic_DNA"/>
</dbReference>
<dbReference type="SMR" id="A9MKD1"/>
<dbReference type="STRING" id="41514.SARI_02287"/>
<dbReference type="KEGG" id="ses:SARI_02287"/>
<dbReference type="HOGENOM" id="CLU_069765_0_0_6"/>
<dbReference type="UniPathway" id="UPA00253">
    <property type="reaction ID" value="UER00332"/>
</dbReference>
<dbReference type="Proteomes" id="UP000002084">
    <property type="component" value="Chromosome"/>
</dbReference>
<dbReference type="GO" id="GO:0005524">
    <property type="term" value="F:ATP binding"/>
    <property type="evidence" value="ECO:0007669"/>
    <property type="project" value="UniProtKB-KW"/>
</dbReference>
<dbReference type="GO" id="GO:0004515">
    <property type="term" value="F:nicotinate-nucleotide adenylyltransferase activity"/>
    <property type="evidence" value="ECO:0007669"/>
    <property type="project" value="UniProtKB-UniRule"/>
</dbReference>
<dbReference type="GO" id="GO:0009435">
    <property type="term" value="P:NAD biosynthetic process"/>
    <property type="evidence" value="ECO:0007669"/>
    <property type="project" value="UniProtKB-UniRule"/>
</dbReference>
<dbReference type="CDD" id="cd02165">
    <property type="entry name" value="NMNAT"/>
    <property type="match status" value="1"/>
</dbReference>
<dbReference type="FunFam" id="3.40.50.620:FF:000039">
    <property type="entry name" value="Probable nicotinate-nucleotide adenylyltransferase"/>
    <property type="match status" value="1"/>
</dbReference>
<dbReference type="Gene3D" id="3.40.50.620">
    <property type="entry name" value="HUPs"/>
    <property type="match status" value="1"/>
</dbReference>
<dbReference type="HAMAP" id="MF_00244">
    <property type="entry name" value="NaMN_adenylyltr"/>
    <property type="match status" value="1"/>
</dbReference>
<dbReference type="InterPro" id="IPR004821">
    <property type="entry name" value="Cyt_trans-like"/>
</dbReference>
<dbReference type="InterPro" id="IPR005248">
    <property type="entry name" value="NadD/NMNAT"/>
</dbReference>
<dbReference type="InterPro" id="IPR014729">
    <property type="entry name" value="Rossmann-like_a/b/a_fold"/>
</dbReference>
<dbReference type="NCBIfam" id="TIGR00125">
    <property type="entry name" value="cyt_tran_rel"/>
    <property type="match status" value="1"/>
</dbReference>
<dbReference type="NCBIfam" id="TIGR00482">
    <property type="entry name" value="nicotinate (nicotinamide) nucleotide adenylyltransferase"/>
    <property type="match status" value="1"/>
</dbReference>
<dbReference type="NCBIfam" id="NF000839">
    <property type="entry name" value="PRK00071.1-1"/>
    <property type="match status" value="1"/>
</dbReference>
<dbReference type="NCBIfam" id="NF000840">
    <property type="entry name" value="PRK00071.1-3"/>
    <property type="match status" value="1"/>
</dbReference>
<dbReference type="PANTHER" id="PTHR39321">
    <property type="entry name" value="NICOTINATE-NUCLEOTIDE ADENYLYLTRANSFERASE-RELATED"/>
    <property type="match status" value="1"/>
</dbReference>
<dbReference type="PANTHER" id="PTHR39321:SF3">
    <property type="entry name" value="PHOSPHOPANTETHEINE ADENYLYLTRANSFERASE"/>
    <property type="match status" value="1"/>
</dbReference>
<dbReference type="Pfam" id="PF01467">
    <property type="entry name" value="CTP_transf_like"/>
    <property type="match status" value="1"/>
</dbReference>
<dbReference type="SUPFAM" id="SSF52374">
    <property type="entry name" value="Nucleotidylyl transferase"/>
    <property type="match status" value="1"/>
</dbReference>
<evidence type="ECO:0000255" key="1">
    <source>
        <dbReference type="HAMAP-Rule" id="MF_00244"/>
    </source>
</evidence>
<evidence type="ECO:0000305" key="2"/>